<evidence type="ECO:0000255" key="1">
    <source>
        <dbReference type="PROSITE-ProRule" id="PRU00160"/>
    </source>
</evidence>
<evidence type="ECO:0000256" key="2">
    <source>
        <dbReference type="SAM" id="MobiDB-lite"/>
    </source>
</evidence>
<evidence type="ECO:0000269" key="3">
    <source>
    </source>
</evidence>
<evidence type="ECO:0000269" key="4">
    <source>
    </source>
</evidence>
<evidence type="ECO:0000269" key="5">
    <source>
    </source>
</evidence>
<evidence type="ECO:0000269" key="6">
    <source>
    </source>
</evidence>
<evidence type="ECO:0000269" key="7">
    <source>
    </source>
</evidence>
<evidence type="ECO:0000269" key="8">
    <source>
    </source>
</evidence>
<evidence type="ECO:0000269" key="9">
    <source>
    </source>
</evidence>
<evidence type="ECO:0000269" key="10">
    <source>
    </source>
</evidence>
<evidence type="ECO:0000269" key="11">
    <source>
    </source>
</evidence>
<evidence type="ECO:0000303" key="12">
    <source>
    </source>
</evidence>
<evidence type="ECO:0000303" key="13">
    <source>
    </source>
</evidence>
<evidence type="ECO:0000305" key="14"/>
<evidence type="ECO:0000305" key="15">
    <source>
    </source>
</evidence>
<evidence type="ECO:0000305" key="16">
    <source>
    </source>
</evidence>
<evidence type="ECO:0000305" key="17">
    <source>
    </source>
</evidence>
<evidence type="ECO:0000312" key="18">
    <source>
        <dbReference type="HGNC" id="HGNC:1791"/>
    </source>
</evidence>
<evidence type="ECO:0007829" key="19">
    <source>
        <dbReference type="PDB" id="1FPZ"/>
    </source>
</evidence>
<evidence type="ECO:0007829" key="20">
    <source>
        <dbReference type="PDB" id="1FQ1"/>
    </source>
</evidence>
<gene>
    <name evidence="18" type="primary">CDKN3</name>
    <name type="synonym">CDI1</name>
    <name type="synonym">CIP2</name>
    <name type="synonym">KAP</name>
</gene>
<comment type="function">
    <text evidence="9 10 11">May play a role in cell cycle regulation. Dual specificity CC phosphatase active toward substrates containing either phosphotyrosine or phosphoserine residues (PubMed:8127873, PubMed:8242750). Dephosphorylates CDK2 at 'Thr-160' in a cyclin-dependent manner (PubMed:7569954).</text>
</comment>
<comment type="catalytic activity">
    <reaction evidence="10 11">
        <text>O-phospho-L-tyrosyl-[protein] + H2O = L-tyrosyl-[protein] + phosphate</text>
        <dbReference type="Rhea" id="RHEA:10684"/>
        <dbReference type="Rhea" id="RHEA-COMP:10136"/>
        <dbReference type="Rhea" id="RHEA-COMP:20101"/>
        <dbReference type="ChEBI" id="CHEBI:15377"/>
        <dbReference type="ChEBI" id="CHEBI:43474"/>
        <dbReference type="ChEBI" id="CHEBI:46858"/>
        <dbReference type="ChEBI" id="CHEBI:61978"/>
        <dbReference type="EC" id="3.1.3.48"/>
    </reaction>
    <physiologicalReaction direction="left-to-right" evidence="17">
        <dbReference type="Rhea" id="RHEA:10685"/>
    </physiologicalReaction>
</comment>
<comment type="catalytic activity">
    <reaction evidence="9">
        <text>O-phospho-L-threonyl-[protein] + H2O = L-threonyl-[protein] + phosphate</text>
        <dbReference type="Rhea" id="RHEA:47004"/>
        <dbReference type="Rhea" id="RHEA-COMP:11060"/>
        <dbReference type="Rhea" id="RHEA-COMP:11605"/>
        <dbReference type="ChEBI" id="CHEBI:15377"/>
        <dbReference type="ChEBI" id="CHEBI:30013"/>
        <dbReference type="ChEBI" id="CHEBI:43474"/>
        <dbReference type="ChEBI" id="CHEBI:61977"/>
        <dbReference type="EC" id="3.1.3.16"/>
    </reaction>
    <physiologicalReaction direction="left-to-right" evidence="15">
        <dbReference type="Rhea" id="RHEA:47005"/>
    </physiologicalReaction>
</comment>
<comment type="catalytic activity">
    <reaction evidence="10">
        <text>O-phospho-L-seryl-[protein] + H2O = L-seryl-[protein] + phosphate</text>
        <dbReference type="Rhea" id="RHEA:20629"/>
        <dbReference type="Rhea" id="RHEA-COMP:9863"/>
        <dbReference type="Rhea" id="RHEA-COMP:11604"/>
        <dbReference type="ChEBI" id="CHEBI:15377"/>
        <dbReference type="ChEBI" id="CHEBI:29999"/>
        <dbReference type="ChEBI" id="CHEBI:43474"/>
        <dbReference type="ChEBI" id="CHEBI:83421"/>
        <dbReference type="EC" id="3.1.3.16"/>
    </reaction>
    <physiologicalReaction direction="left-to-right" evidence="16">
        <dbReference type="Rhea" id="RHEA:20630"/>
    </physiologicalReaction>
</comment>
<comment type="subunit">
    <text evidence="5 6 7 8 10 11">Interacts with cyclin-dependent kinases such as CDK1, CDK2 and CDK3. Does not interact with CDK4. Interacts (via C-terminus) with phosphorylated CDK2 (via C-terminal helix). Interacts with MS4A3 (via C-terminus); the interaction enhances CDKN3 enzymatic activity.</text>
</comment>
<comment type="interaction">
    <interactant intactId="EBI-1031527">
        <id>Q16667</id>
    </interactant>
    <interactant intactId="EBI-742108">
        <id>Q96B23</id>
        <label>ARK2N</label>
    </interactant>
    <organismsDiffer>false</organismsDiffer>
    <experiments>2</experiments>
</comment>
<comment type="interaction">
    <interactant intactId="EBI-1031527">
        <id>Q16667</id>
    </interactant>
    <interactant intactId="EBI-375096">
        <id>P24941</id>
        <label>CDK2</label>
    </interactant>
    <organismsDiffer>false</organismsDiffer>
    <experiments>9</experiments>
</comment>
<comment type="subcellular location">
    <subcellularLocation>
        <location evidence="3">Cytoplasm</location>
        <location evidence="3">Perinuclear region</location>
    </subcellularLocation>
</comment>
<comment type="alternative products">
    <event type="alternative splicing"/>
    <isoform>
        <id>Q16667-1</id>
        <name>1</name>
        <sequence type="displayed"/>
    </isoform>
    <isoform>
        <id>Q16667-2</id>
        <name>2</name>
        <sequence type="described" ref="VSP_036613"/>
    </isoform>
</comment>
<comment type="induction">
    <text evidence="3">Up-regulated in breast and prostate cancer cells.</text>
</comment>
<comment type="disease" evidence="4">
    <disease id="DI-01708">
        <name>Hepatocellular carcinoma</name>
        <acronym>HCC</acronym>
        <description>A primary malignant neoplasm of epithelial liver cells. The major risk factors for HCC are chronic hepatitis B virus (HBV) infection, chronic hepatitis C virus (HCV) infection, prolonged dietary aflatoxin exposure, alcoholic cirrhosis, and cirrhosis due to other causes.</description>
        <dbReference type="MIM" id="114550"/>
    </disease>
    <text>The gene represented in this entry may be involved in disease pathogenesis.</text>
</comment>
<comment type="similarity">
    <text evidence="14">Belongs to the protein-tyrosine phosphatase family.</text>
</comment>
<dbReference type="EC" id="3.1.3.16" evidence="9"/>
<dbReference type="EC" id="3.1.3.48" evidence="10 11"/>
<dbReference type="EMBL" id="U02681">
    <property type="protein sequence ID" value="AAC04932.1"/>
    <property type="molecule type" value="mRNA"/>
</dbReference>
<dbReference type="EMBL" id="L27711">
    <property type="protein sequence ID" value="AAA66496.1"/>
    <property type="molecule type" value="mRNA"/>
</dbReference>
<dbReference type="EMBL" id="AF213033">
    <property type="protein sequence ID" value="AAK06365.1"/>
    <property type="molecule type" value="mRNA"/>
</dbReference>
<dbReference type="EMBL" id="AF213036">
    <property type="protein sequence ID" value="AAK06368.1"/>
    <property type="molecule type" value="mRNA"/>
</dbReference>
<dbReference type="EMBL" id="AF213038">
    <property type="protein sequence ID" value="AAK06370.1"/>
    <property type="molecule type" value="mRNA"/>
</dbReference>
<dbReference type="EMBL" id="AF213039">
    <property type="protein sequence ID" value="AAK06371.1"/>
    <property type="molecule type" value="mRNA"/>
</dbReference>
<dbReference type="EMBL" id="AF213041">
    <property type="protein sequence ID" value="AAK06373.1"/>
    <property type="molecule type" value="mRNA"/>
</dbReference>
<dbReference type="EMBL" id="AF213042">
    <property type="protein sequence ID" value="AAK06374.1"/>
    <property type="molecule type" value="mRNA"/>
</dbReference>
<dbReference type="EMBL" id="AF213046">
    <property type="protein sequence ID" value="AAK06377.1"/>
    <property type="molecule type" value="mRNA"/>
</dbReference>
<dbReference type="EMBL" id="AF213047">
    <property type="protein sequence ID" value="AAK06378.1"/>
    <property type="molecule type" value="mRNA"/>
</dbReference>
<dbReference type="EMBL" id="AF213049">
    <property type="protein sequence ID" value="AAK06380.1"/>
    <property type="molecule type" value="mRNA"/>
</dbReference>
<dbReference type="EMBL" id="AF213053">
    <property type="protein sequence ID" value="AAK06384.1"/>
    <property type="molecule type" value="mRNA"/>
</dbReference>
<dbReference type="EMBL" id="AY257474">
    <property type="protein sequence ID" value="AAP13062.1"/>
    <property type="molecule type" value="mRNA"/>
</dbReference>
<dbReference type="EMBL" id="L25876">
    <property type="protein sequence ID" value="AAA60222.1"/>
    <property type="molecule type" value="mRNA"/>
</dbReference>
<dbReference type="EMBL" id="EF560750">
    <property type="protein sequence ID" value="ABQ59060.1"/>
    <property type="molecule type" value="mRNA"/>
</dbReference>
<dbReference type="EMBL" id="CR407666">
    <property type="protein sequence ID" value="CAG28594.1"/>
    <property type="molecule type" value="mRNA"/>
</dbReference>
<dbReference type="EMBL" id="BT019451">
    <property type="protein sequence ID" value="AAV38258.1"/>
    <property type="molecule type" value="mRNA"/>
</dbReference>
<dbReference type="EMBL" id="AY194117">
    <property type="protein sequence ID" value="AAN86348.1"/>
    <property type="molecule type" value="Genomic_DNA"/>
</dbReference>
<dbReference type="EMBL" id="CH471061">
    <property type="protein sequence ID" value="EAW80632.1"/>
    <property type="molecule type" value="Genomic_DNA"/>
</dbReference>
<dbReference type="EMBL" id="CH471061">
    <property type="protein sequence ID" value="EAW80634.1"/>
    <property type="molecule type" value="Genomic_DNA"/>
</dbReference>
<dbReference type="EMBL" id="BC064965">
    <property type="protein sequence ID" value="AAH64965.1"/>
    <property type="molecule type" value="mRNA"/>
</dbReference>
<dbReference type="CCDS" id="CCDS45109.1">
    <molecule id="Q16667-2"/>
</dbReference>
<dbReference type="CCDS" id="CCDS9716.1">
    <molecule id="Q16667-1"/>
</dbReference>
<dbReference type="PIR" id="A49436">
    <property type="entry name" value="A49436"/>
</dbReference>
<dbReference type="RefSeq" id="NP_001124323.1">
    <molecule id="Q16667-2"/>
    <property type="nucleotide sequence ID" value="NM_001130851.2"/>
</dbReference>
<dbReference type="RefSeq" id="NP_005183.2">
    <molecule id="Q16667-1"/>
    <property type="nucleotide sequence ID" value="NM_005192.3"/>
</dbReference>
<dbReference type="PDB" id="1FPZ">
    <property type="method" value="X-ray"/>
    <property type="resolution" value="2.00 A"/>
    <property type="chains" value="A/B/C/D/E/F=1-212"/>
</dbReference>
<dbReference type="PDB" id="1FQ1">
    <property type="method" value="X-ray"/>
    <property type="resolution" value="3.00 A"/>
    <property type="chains" value="A=1-212"/>
</dbReference>
<dbReference type="PDBsum" id="1FPZ"/>
<dbReference type="PDBsum" id="1FQ1"/>
<dbReference type="SMR" id="Q16667"/>
<dbReference type="BioGRID" id="107467">
    <property type="interactions" value="52"/>
</dbReference>
<dbReference type="DIP" id="DIP-245N"/>
<dbReference type="FunCoup" id="Q16667">
    <property type="interactions" value="1162"/>
</dbReference>
<dbReference type="IntAct" id="Q16667">
    <property type="interactions" value="22"/>
</dbReference>
<dbReference type="MINT" id="Q16667"/>
<dbReference type="STRING" id="9606.ENSP00000335357"/>
<dbReference type="DEPOD" id="CDKN3"/>
<dbReference type="iPTMnet" id="Q16667"/>
<dbReference type="PhosphoSitePlus" id="Q16667"/>
<dbReference type="BioMuta" id="CDKN3"/>
<dbReference type="DMDM" id="2499769"/>
<dbReference type="jPOST" id="Q16667"/>
<dbReference type="MassIVE" id="Q16667"/>
<dbReference type="PaxDb" id="9606-ENSP00000335357"/>
<dbReference type="PeptideAtlas" id="Q16667"/>
<dbReference type="ProteomicsDB" id="61026">
    <molecule id="Q16667-1"/>
</dbReference>
<dbReference type="ProteomicsDB" id="61027">
    <molecule id="Q16667-2"/>
</dbReference>
<dbReference type="Pumba" id="Q16667"/>
<dbReference type="Antibodypedia" id="3940">
    <property type="antibodies" value="537 antibodies from 31 providers"/>
</dbReference>
<dbReference type="DNASU" id="1033"/>
<dbReference type="Ensembl" id="ENST00000335183.11">
    <molecule id="Q16667-1"/>
    <property type="protein sequence ID" value="ENSP00000335357.6"/>
    <property type="gene ID" value="ENSG00000100526.21"/>
</dbReference>
<dbReference type="Ensembl" id="ENST00000442975.6">
    <molecule id="Q16667-2"/>
    <property type="protein sequence ID" value="ENSP00000415333.2"/>
    <property type="gene ID" value="ENSG00000100526.21"/>
</dbReference>
<dbReference type="GeneID" id="1033"/>
<dbReference type="KEGG" id="hsa:1033"/>
<dbReference type="MANE-Select" id="ENST00000335183.11">
    <property type="protein sequence ID" value="ENSP00000335357.6"/>
    <property type="RefSeq nucleotide sequence ID" value="NM_005192.4"/>
    <property type="RefSeq protein sequence ID" value="NP_005183.2"/>
</dbReference>
<dbReference type="UCSC" id="uc001xap.4">
    <molecule id="Q16667-1"/>
    <property type="organism name" value="human"/>
</dbReference>
<dbReference type="AGR" id="HGNC:1791"/>
<dbReference type="CTD" id="1033"/>
<dbReference type="DisGeNET" id="1033"/>
<dbReference type="GeneCards" id="CDKN3"/>
<dbReference type="HGNC" id="HGNC:1791">
    <property type="gene designation" value="CDKN3"/>
</dbReference>
<dbReference type="HPA" id="ENSG00000100526">
    <property type="expression patterns" value="Tissue enriched (testis)"/>
</dbReference>
<dbReference type="MalaCards" id="CDKN3"/>
<dbReference type="MIM" id="114550">
    <property type="type" value="phenotype"/>
</dbReference>
<dbReference type="MIM" id="123832">
    <property type="type" value="gene"/>
</dbReference>
<dbReference type="neXtProt" id="NX_Q16667"/>
<dbReference type="OpenTargets" id="ENSG00000100526"/>
<dbReference type="PharmGKB" id="PA26324"/>
<dbReference type="VEuPathDB" id="HostDB:ENSG00000100526"/>
<dbReference type="eggNOG" id="KOG1720">
    <property type="taxonomic scope" value="Eukaryota"/>
</dbReference>
<dbReference type="GeneTree" id="ENSGT00390000004717"/>
<dbReference type="InParanoid" id="Q16667"/>
<dbReference type="OMA" id="CRYKDIR"/>
<dbReference type="OrthoDB" id="19045at2759"/>
<dbReference type="PAN-GO" id="Q16667">
    <property type="GO annotations" value="2 GO annotations based on evolutionary models"/>
</dbReference>
<dbReference type="PhylomeDB" id="Q16667"/>
<dbReference type="TreeFam" id="TF101040"/>
<dbReference type="PathwayCommons" id="Q16667"/>
<dbReference type="SignaLink" id="Q16667"/>
<dbReference type="SIGNOR" id="Q16667"/>
<dbReference type="BioGRID-ORCS" id="1033">
    <property type="hits" value="6 hits in 1172 CRISPR screens"/>
</dbReference>
<dbReference type="CD-CODE" id="8C2F96ED">
    <property type="entry name" value="Centrosome"/>
</dbReference>
<dbReference type="ChiTaRS" id="CDKN3">
    <property type="organism name" value="human"/>
</dbReference>
<dbReference type="EvolutionaryTrace" id="Q16667"/>
<dbReference type="GeneWiki" id="CDKN3"/>
<dbReference type="GenomeRNAi" id="1033"/>
<dbReference type="Pharos" id="Q16667">
    <property type="development level" value="Tbio"/>
</dbReference>
<dbReference type="PRO" id="PR:Q16667"/>
<dbReference type="Proteomes" id="UP000005640">
    <property type="component" value="Chromosome 14"/>
</dbReference>
<dbReference type="RNAct" id="Q16667">
    <property type="molecule type" value="protein"/>
</dbReference>
<dbReference type="Bgee" id="ENSG00000100526">
    <property type="expression patterns" value="Expressed in left testis and 142 other cell types or tissues"/>
</dbReference>
<dbReference type="ExpressionAtlas" id="Q16667">
    <property type="expression patterns" value="baseline and differential"/>
</dbReference>
<dbReference type="GO" id="GO:0005737">
    <property type="term" value="C:cytoplasm"/>
    <property type="evidence" value="ECO:0000318"/>
    <property type="project" value="GO_Central"/>
</dbReference>
<dbReference type="GO" id="GO:0005829">
    <property type="term" value="C:cytosol"/>
    <property type="evidence" value="ECO:0000314"/>
    <property type="project" value="HPA"/>
</dbReference>
<dbReference type="GO" id="GO:0005634">
    <property type="term" value="C:nucleus"/>
    <property type="evidence" value="ECO:0000318"/>
    <property type="project" value="GO_Central"/>
</dbReference>
<dbReference type="GO" id="GO:0048471">
    <property type="term" value="C:perinuclear region of cytoplasm"/>
    <property type="evidence" value="ECO:0000314"/>
    <property type="project" value="UniProtKB"/>
</dbReference>
<dbReference type="GO" id="GO:0004722">
    <property type="term" value="F:protein serine/threonine phosphatase activity"/>
    <property type="evidence" value="ECO:0000314"/>
    <property type="project" value="MGI"/>
</dbReference>
<dbReference type="GO" id="GO:0004725">
    <property type="term" value="F:protein tyrosine phosphatase activity"/>
    <property type="evidence" value="ECO:0000314"/>
    <property type="project" value="MGI"/>
</dbReference>
<dbReference type="GO" id="GO:0008138">
    <property type="term" value="F:protein tyrosine/serine/threonine phosphatase activity"/>
    <property type="evidence" value="ECO:0000304"/>
    <property type="project" value="ProtInc"/>
</dbReference>
<dbReference type="GO" id="GO:0000082">
    <property type="term" value="P:G1/S transition of mitotic cell cycle"/>
    <property type="evidence" value="ECO:0000304"/>
    <property type="project" value="ProtInc"/>
</dbReference>
<dbReference type="GO" id="GO:0008285">
    <property type="term" value="P:negative regulation of cell population proliferation"/>
    <property type="evidence" value="ECO:0000304"/>
    <property type="project" value="ProtInc"/>
</dbReference>
<dbReference type="GO" id="GO:0051726">
    <property type="term" value="P:regulation of cell cycle"/>
    <property type="evidence" value="ECO:0000314"/>
    <property type="project" value="MGI"/>
</dbReference>
<dbReference type="GO" id="GO:0000079">
    <property type="term" value="P:regulation of cyclin-dependent protein serine/threonine kinase activity"/>
    <property type="evidence" value="ECO:0000304"/>
    <property type="project" value="ProtInc"/>
</dbReference>
<dbReference type="CDD" id="cd14505">
    <property type="entry name" value="CDKN3-like"/>
    <property type="match status" value="1"/>
</dbReference>
<dbReference type="FunFam" id="3.90.190.10:FF:000046">
    <property type="entry name" value="Cyclin-dependent kinase inhibitor 3"/>
    <property type="match status" value="1"/>
</dbReference>
<dbReference type="Gene3D" id="3.90.190.10">
    <property type="entry name" value="Protein tyrosine phosphatase superfamily"/>
    <property type="match status" value="1"/>
</dbReference>
<dbReference type="IDEAL" id="IID00605"/>
<dbReference type="InterPro" id="IPR008425">
    <property type="entry name" value="CDK_inhib_3"/>
</dbReference>
<dbReference type="InterPro" id="IPR022778">
    <property type="entry name" value="CDKN3"/>
</dbReference>
<dbReference type="InterPro" id="IPR029021">
    <property type="entry name" value="Prot-tyrosine_phosphatase-like"/>
</dbReference>
<dbReference type="InterPro" id="IPR050561">
    <property type="entry name" value="PTP"/>
</dbReference>
<dbReference type="InterPro" id="IPR003595">
    <property type="entry name" value="Tyr_Pase_cat"/>
</dbReference>
<dbReference type="InterPro" id="IPR000387">
    <property type="entry name" value="Tyr_Pase_dom"/>
</dbReference>
<dbReference type="InterPro" id="IPR020422">
    <property type="entry name" value="TYR_PHOSPHATASE_DUAL_dom"/>
</dbReference>
<dbReference type="PANTHER" id="PTHR23339">
    <property type="entry name" value="TYROSINE SPECIFIC PROTEIN PHOSPHATASE AND DUAL SPECIFICITY PROTEIN PHOSPHATASE"/>
    <property type="match status" value="1"/>
</dbReference>
<dbReference type="Pfam" id="PF05706">
    <property type="entry name" value="CDKN3"/>
    <property type="match status" value="1"/>
</dbReference>
<dbReference type="PIRSF" id="PIRSF037322">
    <property type="entry name" value="CDKN3"/>
    <property type="match status" value="1"/>
</dbReference>
<dbReference type="SMART" id="SM00404">
    <property type="entry name" value="PTPc_motif"/>
    <property type="match status" value="1"/>
</dbReference>
<dbReference type="SUPFAM" id="SSF52799">
    <property type="entry name" value="(Phosphotyrosine protein) phosphatases II"/>
    <property type="match status" value="1"/>
</dbReference>
<dbReference type="PROSITE" id="PS50056">
    <property type="entry name" value="TYR_PHOSPHATASE_2"/>
    <property type="match status" value="1"/>
</dbReference>
<dbReference type="PROSITE" id="PS50054">
    <property type="entry name" value="TYR_PHOSPHATASE_DUAL"/>
    <property type="match status" value="1"/>
</dbReference>
<organism>
    <name type="scientific">Homo sapiens</name>
    <name type="common">Human</name>
    <dbReference type="NCBI Taxonomy" id="9606"/>
    <lineage>
        <taxon>Eukaryota</taxon>
        <taxon>Metazoa</taxon>
        <taxon>Chordata</taxon>
        <taxon>Craniata</taxon>
        <taxon>Vertebrata</taxon>
        <taxon>Euteleostomi</taxon>
        <taxon>Mammalia</taxon>
        <taxon>Eutheria</taxon>
        <taxon>Euarchontoglires</taxon>
        <taxon>Primates</taxon>
        <taxon>Haplorrhini</taxon>
        <taxon>Catarrhini</taxon>
        <taxon>Hominidae</taxon>
        <taxon>Homo</taxon>
    </lineage>
</organism>
<feature type="chain" id="PRO_0000094949" description="Cyclin-dependent kinase inhibitor 3">
    <location>
        <begin position="1"/>
        <end position="212"/>
    </location>
</feature>
<feature type="domain" description="Tyrosine-protein phosphatase" evidence="1">
    <location>
        <begin position="33"/>
        <end position="201"/>
    </location>
</feature>
<feature type="region of interest" description="Interaction with CDK2">
    <location>
        <begin position="1"/>
        <end position="34"/>
    </location>
</feature>
<feature type="region of interest" description="Disordered" evidence="2">
    <location>
        <begin position="1"/>
        <end position="20"/>
    </location>
</feature>
<feature type="compositionally biased region" description="Polar residues" evidence="2">
    <location>
        <begin position="1"/>
        <end position="12"/>
    </location>
</feature>
<feature type="active site" description="Phosphocysteine intermediate" evidence="1">
    <location>
        <position position="140"/>
    </location>
</feature>
<feature type="splice variant" id="VSP_036613" description="In isoform 2." evidence="12 13">
    <location>
        <begin position="11"/>
        <end position="50"/>
    </location>
</feature>
<feature type="sequence variant" id="VAR_013842" description="In HCC; patient BX-01." evidence="4">
    <original>W</original>
    <variation>R</variation>
    <location>
        <position position="31"/>
    </location>
</feature>
<feature type="sequence variant" id="VAR_013843" description="In HCC; patient T9." evidence="4">
    <original>F</original>
    <variation>L</variation>
    <location>
        <position position="78"/>
    </location>
</feature>
<feature type="sequence variant" id="VAR_013844" description="In HCC; patient BX-01; dbSNP:rs2030352101." evidence="4">
    <original>C</original>
    <variation>Y</variation>
    <location>
        <position position="79"/>
    </location>
</feature>
<feature type="sequence variant" id="VAR_013845" description="In HCC; patient BX-10; dbSNP:rs760687800." evidence="4">
    <original>N</original>
    <variation>K</variation>
    <location>
        <position position="91"/>
    </location>
</feature>
<feature type="sequence variant" id="VAR_013846" description="In HCC; patient NT1." evidence="4">
    <original>D</original>
    <variation>V</variation>
    <location>
        <position position="94"/>
    </location>
</feature>
<feature type="sequence variant" id="VAR_013847" description="In HCC; patient BX-05." evidence="4">
    <original>L</original>
    <variation>F</variation>
    <location>
        <position position="95"/>
    </location>
</feature>
<feature type="sequence variant" id="VAR_013848" description="In HCC; patient T9; dbSNP:rs144479038." evidence="4">
    <original>I</original>
    <variation>V</variation>
    <location>
        <position position="108"/>
    </location>
</feature>
<feature type="sequence variant" id="VAR_051769" description="In dbSNP:rs1803843.">
    <original>S</original>
    <variation>F</variation>
    <location>
        <position position="159"/>
    </location>
</feature>
<feature type="sequence variant" id="VAR_013849" description="In HCC; patient NT4." evidence="4">
    <original>N</original>
    <variation>S</variation>
    <location>
        <position position="187"/>
    </location>
</feature>
<feature type="sequence variant" id="VAR_013850" description="In HCC; patient NT4." evidence="4">
    <original>K</original>
    <variation>I</variation>
    <location>
        <position position="195"/>
    </location>
</feature>
<feature type="sequence conflict" description="In Ref. 1; AAC04932 and 8; AAV38258." evidence="14" ref="1 8">
    <original>K</original>
    <variation>E</variation>
    <location>
        <position position="2"/>
    </location>
</feature>
<feature type="sequence conflict" description="In Ref. 3; AAK06380." evidence="14" ref="3">
    <original>S</original>
    <variation>G</variation>
    <location>
        <position position="10"/>
    </location>
</feature>
<feature type="strand" evidence="19">
    <location>
        <begin position="30"/>
        <end position="33"/>
    </location>
</feature>
<feature type="helix" evidence="19">
    <location>
        <begin position="35"/>
        <end position="37"/>
    </location>
</feature>
<feature type="strand" evidence="19">
    <location>
        <begin position="42"/>
        <end position="47"/>
    </location>
</feature>
<feature type="helix" evidence="19">
    <location>
        <begin position="60"/>
        <end position="70"/>
    </location>
</feature>
<feature type="strand" evidence="19">
    <location>
        <begin position="74"/>
        <end position="77"/>
    </location>
</feature>
<feature type="helix" evidence="19">
    <location>
        <begin position="81"/>
        <end position="86"/>
    </location>
</feature>
<feature type="helix" evidence="19">
    <location>
        <begin position="92"/>
        <end position="98"/>
    </location>
</feature>
<feature type="strand" evidence="19">
    <location>
        <begin position="102"/>
        <end position="105"/>
    </location>
</feature>
<feature type="helix" evidence="19">
    <location>
        <begin position="116"/>
        <end position="131"/>
    </location>
</feature>
<feature type="strand" evidence="19">
    <location>
        <begin position="136"/>
        <end position="139"/>
    </location>
</feature>
<feature type="strand" evidence="19">
    <location>
        <begin position="141"/>
        <end position="145"/>
    </location>
</feature>
<feature type="helix" evidence="19">
    <location>
        <begin position="146"/>
        <end position="158"/>
    </location>
</feature>
<feature type="strand" evidence="20">
    <location>
        <begin position="160"/>
        <end position="162"/>
    </location>
</feature>
<feature type="helix" evidence="19">
    <location>
        <begin position="164"/>
        <end position="175"/>
    </location>
</feature>
<feature type="helix" evidence="19">
    <location>
        <begin position="183"/>
        <end position="189"/>
    </location>
</feature>
<feature type="helix" evidence="19">
    <location>
        <begin position="192"/>
        <end position="197"/>
    </location>
</feature>
<feature type="turn" evidence="20">
    <location>
        <begin position="198"/>
        <end position="200"/>
    </location>
</feature>
<sequence>MKPPSSIQTSEFDSSDEEPIEDEQTPIHISWLSLSRVNCSQFLGLCALPGCKFKDVRRNVQKDTEELKSCGIQDIFVFCTRGELSKYRVPNLLDLYQQCGIITHHHPIADGGTPDIASCCEIMEELTTCLKNYRKTLIHCYGGLGRSCLVAACLLLYLSDTISPEQAIDSLRDLRGSGAIQTIKQYNYLHEFRDKLAAHLSSRDSQSRSVSR</sequence>
<keyword id="KW-0002">3D-structure</keyword>
<keyword id="KW-0025">Alternative splicing</keyword>
<keyword id="KW-0131">Cell cycle</keyword>
<keyword id="KW-0963">Cytoplasm</keyword>
<keyword id="KW-0225">Disease variant</keyword>
<keyword id="KW-0378">Hydrolase</keyword>
<keyword id="KW-0904">Protein phosphatase</keyword>
<keyword id="KW-1267">Proteomics identification</keyword>
<keyword id="KW-1185">Reference proteome</keyword>
<proteinExistence type="evidence at protein level"/>
<accession>Q16667</accession>
<accession>Q53ZU6</accession>
<accession>Q5U0M4</accession>
<accession>Q6P1N8</accession>
<accession>Q99585</accession>
<accession>Q9BPW7</accession>
<accession>Q9BY36</accession>
<accession>Q9C042</accession>
<accession>Q9C046</accession>
<accession>Q9C047</accession>
<accession>Q9C049</accession>
<accession>Q9C051</accession>
<accession>Q9C053</accession>
<reference key="1">
    <citation type="journal article" date="1993" name="Cell">
        <title>Cdi1, a human G1 and S phase protein phosphatase that associates with Cdk2.</title>
        <authorList>
            <person name="Gyuris J."/>
            <person name="Golemis E."/>
            <person name="Chertkov H."/>
            <person name="Brent R."/>
        </authorList>
    </citation>
    <scope>NUCLEOTIDE SEQUENCE [MRNA] (ISOFORM 1)</scope>
    <scope>FUNCTION</scope>
    <scope>CATALYTIC ACTIVITY</scope>
    <scope>INTERACTION WITH CDK1; CDK2 AND CDK3</scope>
</reference>
<reference key="2">
    <citation type="journal article" date="1994" name="Proc. Natl. Acad. Sci. U.S.A.">
        <title>KAP: a dual specificity phosphatase that interacts with cyclin-dependent kinases.</title>
        <authorList>
            <person name="Hannon G.J."/>
            <person name="Casso D."/>
            <person name="Beach D."/>
        </authorList>
    </citation>
    <scope>NUCLEOTIDE SEQUENCE [MRNA] (ISOFORM 1)</scope>
    <scope>FUNCTION</scope>
    <scope>CATALYTIC ACTIVITY</scope>
    <scope>INTERACTION WITH CDK1 AND CDK2</scope>
</reference>
<reference key="3">
    <citation type="journal article" date="2000" name="Cancer Res.">
        <title>Aberrant transcripts of the cyclin-dependent kinase-associated protein phosphatase in hepatocellular carcinoma.</title>
        <authorList>
            <person name="Yeh C.-T."/>
            <person name="Lu S.-C."/>
            <person name="Chen T.-C."/>
            <person name="Peng C.-Y."/>
            <person name="Liaw Y.-F."/>
        </authorList>
    </citation>
    <scope>NUCLEOTIDE SEQUENCE [MRNA] (ISOFORMS 1 AND 2)</scope>
    <scope>VARIANTS HCC ARG-31; LEU-78; TYR-79; LYS-91; VAL-94; PHE-95; VAL-108; SER-187 AND ILE-195</scope>
</reference>
<reference key="4">
    <citation type="journal article" date="2003" name="Biochem. Biophys. Res. Commun.">
        <title>Abolishment of the interaction between cyclin-dependent kinase 2 and Cdk-associated protein phosphatase by a truncated KAP mutant.</title>
        <authorList>
            <person name="Yeh C.-T."/>
            <person name="Lu S.-C."/>
            <person name="Chao C.-H."/>
            <person name="Chao M.-L."/>
        </authorList>
    </citation>
    <scope>NUCLEOTIDE SEQUENCE [MRNA] (ISOFORM 1)</scope>
    <scope>INTERACTION WITH CDK2</scope>
</reference>
<reference key="5">
    <citation type="submission" date="1993-11" db="EMBL/GenBank/DDBJ databases">
        <authorList>
            <person name="Harper W."/>
            <person name="Elledge S.J."/>
        </authorList>
    </citation>
    <scope>NUCLEOTIDE SEQUENCE [MRNA] (ISOFORM 1)</scope>
</reference>
<reference key="6">
    <citation type="submission" date="2007-04" db="EMBL/GenBank/DDBJ databases">
        <authorList>
            <person name="Schupp I."/>
        </authorList>
    </citation>
    <scope>NUCLEOTIDE SEQUENCE [MRNA] (ISOFORM 1)</scope>
</reference>
<reference key="7">
    <citation type="submission" date="2004-05" db="EMBL/GenBank/DDBJ databases">
        <title>Cloning of human full open reading frames in Gateway(TM) system entry vector (pDONR201).</title>
        <authorList>
            <person name="Ebert L."/>
            <person name="Schick M."/>
            <person name="Neubert P."/>
            <person name="Schatten R."/>
            <person name="Henze S."/>
            <person name="Korn B."/>
        </authorList>
    </citation>
    <scope>NUCLEOTIDE SEQUENCE [LARGE SCALE MRNA] (ISOFORM 1)</scope>
</reference>
<reference key="8">
    <citation type="submission" date="2004-10" db="EMBL/GenBank/DDBJ databases">
        <title>Cloning of human full-length CDSs in BD Creator(TM) system donor vector.</title>
        <authorList>
            <person name="Kalnine N."/>
            <person name="Chen X."/>
            <person name="Rolfs A."/>
            <person name="Halleck A."/>
            <person name="Hines L."/>
            <person name="Eisenstein S."/>
            <person name="Koundinya M."/>
            <person name="Raphael J."/>
            <person name="Moreira D."/>
            <person name="Kelley T."/>
            <person name="LaBaer J."/>
            <person name="Lin Y."/>
            <person name="Phelan M."/>
            <person name="Farmer A."/>
        </authorList>
    </citation>
    <scope>NUCLEOTIDE SEQUENCE [LARGE SCALE MRNA] (ISOFORM 1)</scope>
</reference>
<reference key="9">
    <citation type="submission" date="2002-12" db="EMBL/GenBank/DDBJ databases">
        <authorList>
            <consortium name="NIEHS SNPs program"/>
        </authorList>
    </citation>
    <scope>NUCLEOTIDE SEQUENCE [GENOMIC DNA]</scope>
</reference>
<reference key="10">
    <citation type="submission" date="2005-07" db="EMBL/GenBank/DDBJ databases">
        <authorList>
            <person name="Mural R.J."/>
            <person name="Istrail S."/>
            <person name="Sutton G.G."/>
            <person name="Florea L."/>
            <person name="Halpern A.L."/>
            <person name="Mobarry C.M."/>
            <person name="Lippert R."/>
            <person name="Walenz B."/>
            <person name="Shatkay H."/>
            <person name="Dew I."/>
            <person name="Miller J.R."/>
            <person name="Flanigan M.J."/>
            <person name="Edwards N.J."/>
            <person name="Bolanos R."/>
            <person name="Fasulo D."/>
            <person name="Halldorsson B.V."/>
            <person name="Hannenhalli S."/>
            <person name="Turner R."/>
            <person name="Yooseph S."/>
            <person name="Lu F."/>
            <person name="Nusskern D.R."/>
            <person name="Shue B.C."/>
            <person name="Zheng X.H."/>
            <person name="Zhong F."/>
            <person name="Delcher A.L."/>
            <person name="Huson D.H."/>
            <person name="Kravitz S.A."/>
            <person name="Mouchard L."/>
            <person name="Reinert K."/>
            <person name="Remington K.A."/>
            <person name="Clark A.G."/>
            <person name="Waterman M.S."/>
            <person name="Eichler E.E."/>
            <person name="Adams M.D."/>
            <person name="Hunkapiller M.W."/>
            <person name="Myers E.W."/>
            <person name="Venter J.C."/>
        </authorList>
    </citation>
    <scope>NUCLEOTIDE SEQUENCE [LARGE SCALE GENOMIC DNA]</scope>
</reference>
<reference key="11">
    <citation type="journal article" date="2004" name="Genome Res.">
        <title>The status, quality, and expansion of the NIH full-length cDNA project: the Mammalian Gene Collection (MGC).</title>
        <authorList>
            <consortium name="The MGC Project Team"/>
        </authorList>
    </citation>
    <scope>NUCLEOTIDE SEQUENCE [LARGE SCALE MRNA] (ISOFORM 2)</scope>
    <source>
        <tissue>Retinoblastoma</tissue>
    </source>
</reference>
<reference key="12">
    <citation type="journal article" date="1995" name="Science">
        <title>Dephosphorylation of Cdk2 Thr160 by the cyclin-dependent kinase-interacting phosphatase KAP in the absence of cyclin.</title>
        <authorList>
            <person name="Poon R.Y.C."/>
            <person name="Hunter T."/>
        </authorList>
    </citation>
    <scope>FUNCTION</scope>
    <scope>CATALYTIC ACTIVITY</scope>
</reference>
<reference key="13">
    <citation type="journal article" date="2000" name="Mol. Cell. Biol.">
        <title>Overexpression of kinase-associated phosphatase (KAP) in breast and prostate cancer and inhibition of the transformed phenotype by antisense KAP expression.</title>
        <authorList>
            <person name="Lee S.W."/>
            <person name="Reimer C.L."/>
            <person name="Fang L."/>
            <person name="Iruela-Arispe M.L."/>
            <person name="Aaronson S.A."/>
        </authorList>
    </citation>
    <scope>SUBCELLULAR LOCATION</scope>
    <scope>INDUCTION</scope>
</reference>
<reference key="14">
    <citation type="journal article" date="2002" name="J. Clin. Invest.">
        <title>Human HTm4 is a hematopoietic cell cycle regulator.</title>
        <authorList>
            <person name="Donato J.-L."/>
            <person name="Ko J."/>
            <person name="Kutok J.L."/>
            <person name="Cheng T."/>
            <person name="Shirakawa T."/>
            <person name="Mao X.-Q."/>
            <person name="Beach D."/>
            <person name="Scadden D.T."/>
            <person name="Sayegh M.H."/>
            <person name="Adra C.N."/>
        </authorList>
    </citation>
    <scope>INTERACTION WITH MS4A3</scope>
</reference>
<reference key="15">
    <citation type="journal article" date="2005" name="J. Biol. Chem.">
        <title>Binding of HTm4 to cyclin-dependent kinase (Cdk)-associated phosphatase (KAP).Cdk2.cyclin A complex enhances the phosphatase activity of KAP, dissociates cyclin A, and facilitates KAP dephosphorylation of Cdk2.</title>
        <authorList>
            <person name="Chinami M."/>
            <person name="Yano Y."/>
            <person name="Yang X."/>
            <person name="Salahuddin S."/>
            <person name="Moriyama K."/>
            <person name="Shiroishi M."/>
            <person name="Turner H."/>
            <person name="Shirakawa T."/>
            <person name="Adra C.N."/>
        </authorList>
    </citation>
    <scope>INTERACTION WITH MS4A3</scope>
</reference>
<reference key="16">
    <citation type="journal article" date="2001" name="Mol. Cell">
        <title>Phosphoprotein-protein interactions revealed by the crystal structure of kinase-associated phosphatase in complex with phosphoCDK2.</title>
        <authorList>
            <person name="Song H."/>
            <person name="Hanlon N."/>
            <person name="Brown N.R."/>
            <person name="Noble M.E.M."/>
            <person name="Johnson L.N."/>
            <person name="Barford D."/>
        </authorList>
    </citation>
    <scope>X-RAY CRYSTALLOGRAPHY (2.00 ANGSTROMS) IN COMPLEX WITH THR-160 PHOSPHORYLATED CDK2</scope>
</reference>
<protein>
    <recommendedName>
        <fullName evidence="14">Cyclin-dependent kinase inhibitor 3</fullName>
        <ecNumber evidence="9">3.1.3.16</ecNumber>
        <ecNumber evidence="10 11">3.1.3.48</ecNumber>
    </recommendedName>
    <alternativeName>
        <fullName>CDK2-associated dual-specificity phosphatase</fullName>
    </alternativeName>
    <alternativeName>
        <fullName>Cyclin-dependent kinase interactor 1</fullName>
    </alternativeName>
    <alternativeName>
        <fullName>Cyclin-dependent kinase-interacting protein 2</fullName>
    </alternativeName>
    <alternativeName>
        <fullName>Kinase-associated phosphatase</fullName>
    </alternativeName>
</protein>
<name>CDKN3_HUMAN</name>